<feature type="chain" id="PRO_0000183289" description="Cytochrome c oxidase subunit 1">
    <location>
        <begin position="1"/>
        <end position="535"/>
    </location>
</feature>
<feature type="transmembrane region" description="Helical" evidence="3">
    <location>
        <begin position="15"/>
        <end position="37"/>
    </location>
</feature>
<feature type="transmembrane region" description="Helical" evidence="3">
    <location>
        <begin position="58"/>
        <end position="80"/>
    </location>
</feature>
<feature type="transmembrane region" description="Helical" evidence="3">
    <location>
        <begin position="147"/>
        <end position="169"/>
    </location>
</feature>
<feature type="transmembrane region" description="Helical" evidence="3">
    <location>
        <begin position="190"/>
        <end position="212"/>
    </location>
</feature>
<feature type="transmembrane region" description="Helical" evidence="3">
    <location>
        <begin position="238"/>
        <end position="260"/>
    </location>
</feature>
<feature type="transmembrane region" description="Helical" evidence="3">
    <location>
        <begin position="267"/>
        <end position="289"/>
    </location>
</feature>
<feature type="transmembrane region" description="Helical" evidence="3">
    <location>
        <begin position="304"/>
        <end position="326"/>
    </location>
</feature>
<feature type="transmembrane region" description="Helical" evidence="3">
    <location>
        <begin position="339"/>
        <end position="361"/>
    </location>
</feature>
<feature type="transmembrane region" description="Helical" evidence="3">
    <location>
        <begin position="376"/>
        <end position="398"/>
    </location>
</feature>
<feature type="transmembrane region" description="Helical" evidence="3">
    <location>
        <begin position="415"/>
        <end position="437"/>
    </location>
</feature>
<feature type="transmembrane region" description="Helical" evidence="3">
    <location>
        <begin position="452"/>
        <end position="474"/>
    </location>
</feature>
<feature type="binding site" evidence="2">
    <location>
        <position position="40"/>
    </location>
    <ligand>
        <name>Ca(2+)</name>
        <dbReference type="ChEBI" id="CHEBI:29108"/>
    </ligand>
</feature>
<feature type="binding site" evidence="2">
    <location>
        <position position="43"/>
    </location>
    <ligand>
        <name>Ca(2+)</name>
        <dbReference type="ChEBI" id="CHEBI:29108"/>
    </ligand>
</feature>
<feature type="binding site" evidence="2">
    <location>
        <position position="45"/>
    </location>
    <ligand>
        <name>Ca(2+)</name>
        <dbReference type="ChEBI" id="CHEBI:29108"/>
    </ligand>
</feature>
<feature type="binding site" description="axial binding residue" evidence="2">
    <location>
        <position position="63"/>
    </location>
    <ligand>
        <name>Fe(II)-heme a</name>
        <dbReference type="ChEBI" id="CHEBI:61715"/>
        <note>low-spin</note>
    </ligand>
    <ligandPart>
        <name>Fe</name>
        <dbReference type="ChEBI" id="CHEBI:18248"/>
    </ligandPart>
</feature>
<feature type="binding site" evidence="2">
    <location>
        <position position="242"/>
    </location>
    <ligand>
        <name>Cu cation</name>
        <dbReference type="ChEBI" id="CHEBI:23378"/>
        <label>B</label>
    </ligand>
</feature>
<feature type="binding site" evidence="1">
    <location>
        <position position="246"/>
    </location>
    <ligand>
        <name>O2</name>
        <dbReference type="ChEBI" id="CHEBI:15379"/>
    </ligand>
</feature>
<feature type="binding site" evidence="2">
    <location>
        <position position="291"/>
    </location>
    <ligand>
        <name>Cu cation</name>
        <dbReference type="ChEBI" id="CHEBI:23378"/>
        <label>B</label>
    </ligand>
</feature>
<feature type="binding site" evidence="2">
    <location>
        <position position="292"/>
    </location>
    <ligand>
        <name>Cu cation</name>
        <dbReference type="ChEBI" id="CHEBI:23378"/>
        <label>B</label>
    </ligand>
</feature>
<feature type="binding site" evidence="2">
    <location>
        <position position="369"/>
    </location>
    <ligand>
        <name>Mg(2+)</name>
        <dbReference type="ChEBI" id="CHEBI:18420"/>
        <note>ligand shared with subunit 2</note>
    </ligand>
</feature>
<feature type="binding site" evidence="2">
    <location>
        <position position="370"/>
    </location>
    <ligand>
        <name>Mg(2+)</name>
        <dbReference type="ChEBI" id="CHEBI:18420"/>
        <note>ligand shared with subunit 2</note>
    </ligand>
</feature>
<feature type="binding site" description="axial binding residue" evidence="2">
    <location>
        <position position="377"/>
    </location>
    <ligand>
        <name>heme a3</name>
        <dbReference type="ChEBI" id="CHEBI:83282"/>
        <note>high-spin</note>
    </ligand>
    <ligandPart>
        <name>Fe</name>
        <dbReference type="ChEBI" id="CHEBI:18248"/>
    </ligandPart>
</feature>
<feature type="binding site" description="axial binding residue" evidence="2">
    <location>
        <position position="379"/>
    </location>
    <ligand>
        <name>Fe(II)-heme a</name>
        <dbReference type="ChEBI" id="CHEBI:61715"/>
        <note>low-spin</note>
    </ligand>
    <ligandPart>
        <name>Fe</name>
        <dbReference type="ChEBI" id="CHEBI:18248"/>
    </ligandPart>
</feature>
<feature type="binding site" evidence="2">
    <location>
        <position position="442"/>
    </location>
    <ligand>
        <name>Ca(2+)</name>
        <dbReference type="ChEBI" id="CHEBI:29108"/>
    </ligand>
</feature>
<feature type="cross-link" description="1'-histidyl-3'-tyrosine (His-Tyr)" evidence="2">
    <location>
        <begin position="242"/>
        <end position="246"/>
    </location>
</feature>
<evidence type="ECO:0000250" key="1">
    <source>
        <dbReference type="UniProtKB" id="P00396"/>
    </source>
</evidence>
<evidence type="ECO:0000250" key="2">
    <source>
        <dbReference type="UniProtKB" id="P00401"/>
    </source>
</evidence>
<evidence type="ECO:0000255" key="3"/>
<evidence type="ECO:0000305" key="4"/>
<geneLocation type="mitochondrion"/>
<comment type="function">
    <text evidence="2">Component of the cytochrome c oxidase, the last enzyme in the mitochondrial electron transport chain which drives oxidative phosphorylation. The respiratory chain contains 3 multisubunit complexes succinate dehydrogenase (complex II, CII), ubiquinol-cytochrome c oxidoreductase (cytochrome b-c1 complex, complex III, CIII) and cytochrome c oxidase (complex IV, CIV), that cooperate to transfer electrons derived from NADH and succinate to molecular oxygen, creating an electrochemical gradient over the inner membrane that drives transmembrane transport and the ATP synthase. Cytochrome c oxidase is the component of the respiratory chain that catalyzes the reduction of oxygen to water. Electrons originating from reduced cytochrome c in the intermembrane space (IMS) are transferred via the dinuclear copper A center (CU(A)) of subunit 2 and heme A of subunit 1 to the active site in subunit 1, a binuclear center (BNC) formed by heme A3 and copper B (CU(B)). The BNC reduces molecular oxygen to 2 water molecules using 4 electrons from cytochrome c in the IMS and 4 protons from the mitochondrial matrix.</text>
</comment>
<comment type="catalytic activity">
    <reaction evidence="2">
        <text>4 Fe(II)-[cytochrome c] + O2 + 8 H(+)(in) = 4 Fe(III)-[cytochrome c] + 2 H2O + 4 H(+)(out)</text>
        <dbReference type="Rhea" id="RHEA:11436"/>
        <dbReference type="Rhea" id="RHEA-COMP:10350"/>
        <dbReference type="Rhea" id="RHEA-COMP:14399"/>
        <dbReference type="ChEBI" id="CHEBI:15377"/>
        <dbReference type="ChEBI" id="CHEBI:15378"/>
        <dbReference type="ChEBI" id="CHEBI:15379"/>
        <dbReference type="ChEBI" id="CHEBI:29033"/>
        <dbReference type="ChEBI" id="CHEBI:29034"/>
        <dbReference type="EC" id="7.1.1.9"/>
    </reaction>
    <physiologicalReaction direction="left-to-right" evidence="2">
        <dbReference type="Rhea" id="RHEA:11437"/>
    </physiologicalReaction>
</comment>
<comment type="cofactor">
    <cofactor evidence="2">
        <name>heme</name>
        <dbReference type="ChEBI" id="CHEBI:30413"/>
    </cofactor>
    <text evidence="2">Binds 2 heme A groups non-covalently per subunit.</text>
</comment>
<comment type="cofactor">
    <cofactor evidence="2">
        <name>Cu cation</name>
        <dbReference type="ChEBI" id="CHEBI:23378"/>
    </cofactor>
    <text evidence="2">Binds a copper B center.</text>
</comment>
<comment type="pathway">
    <text evidence="2">Energy metabolism; oxidative phosphorylation.</text>
</comment>
<comment type="subunit">
    <text evidence="2">Component of the cytochrome c oxidase (complex IV, CIV), a multisubunit enzyme composed of a catalytic core of 3 subunits and several supernumerary subunits. The complex exists as a monomer or a dimer and forms supercomplexes (SCs) in the inner mitochondrial membrane with ubiquinol-cytochrome c oxidoreductase (cytochrome b-c1 complex, complex III, CIII).</text>
</comment>
<comment type="subcellular location">
    <subcellularLocation>
        <location evidence="2">Mitochondrion inner membrane</location>
        <topology evidence="2">Multi-pass membrane protein</topology>
    </subcellularLocation>
</comment>
<comment type="similarity">
    <text evidence="4">Belongs to the heme-copper respiratory oxidase family.</text>
</comment>
<name>COX1_EREGS</name>
<accession>P62514</accession>
<accession>Q75G35</accession>
<keyword id="KW-0106">Calcium</keyword>
<keyword id="KW-0186">Copper</keyword>
<keyword id="KW-0249">Electron transport</keyword>
<keyword id="KW-0349">Heme</keyword>
<keyword id="KW-0408">Iron</keyword>
<keyword id="KW-0460">Magnesium</keyword>
<keyword id="KW-0472">Membrane</keyword>
<keyword id="KW-0479">Metal-binding</keyword>
<keyword id="KW-0496">Mitochondrion</keyword>
<keyword id="KW-0999">Mitochondrion inner membrane</keyword>
<keyword id="KW-1185">Reference proteome</keyword>
<keyword id="KW-0679">Respiratory chain</keyword>
<keyword id="KW-1278">Translocase</keyword>
<keyword id="KW-0812">Transmembrane</keyword>
<keyword id="KW-1133">Transmembrane helix</keyword>
<keyword id="KW-0813">Transport</keyword>
<dbReference type="EC" id="7.1.1.9"/>
<dbReference type="EMBL" id="AE016821">
    <property type="protein sequence ID" value="AAS50169.1"/>
    <property type="molecule type" value="Genomic_DNA"/>
</dbReference>
<dbReference type="RefSeq" id="NP_987079.1">
    <property type="nucleotide sequence ID" value="NC_005789.1"/>
</dbReference>
<dbReference type="SMR" id="P62514"/>
<dbReference type="FunCoup" id="P62514">
    <property type="interactions" value="610"/>
</dbReference>
<dbReference type="STRING" id="284811.P62514"/>
<dbReference type="EnsemblFungi" id="AAS50169">
    <property type="protein sequence ID" value="AAS50169"/>
    <property type="gene ID" value="AGOS_AMI002W"/>
</dbReference>
<dbReference type="GeneID" id="2760766"/>
<dbReference type="KEGG" id="ago:AGOS_AMI002W"/>
<dbReference type="eggNOG" id="KOG4769">
    <property type="taxonomic scope" value="Eukaryota"/>
</dbReference>
<dbReference type="HOGENOM" id="CLU_011899_7_3_1"/>
<dbReference type="InParanoid" id="P62514"/>
<dbReference type="OMA" id="WAMMSIG"/>
<dbReference type="OrthoDB" id="4905839at2759"/>
<dbReference type="UniPathway" id="UPA00705"/>
<dbReference type="Proteomes" id="UP000000591">
    <property type="component" value="Mitochondrion"/>
</dbReference>
<dbReference type="GO" id="GO:0005743">
    <property type="term" value="C:mitochondrial inner membrane"/>
    <property type="evidence" value="ECO:0007669"/>
    <property type="project" value="UniProtKB-SubCell"/>
</dbReference>
<dbReference type="GO" id="GO:0045277">
    <property type="term" value="C:respiratory chain complex IV"/>
    <property type="evidence" value="ECO:0000318"/>
    <property type="project" value="GO_Central"/>
</dbReference>
<dbReference type="GO" id="GO:0004129">
    <property type="term" value="F:cytochrome-c oxidase activity"/>
    <property type="evidence" value="ECO:0007669"/>
    <property type="project" value="UniProtKB-EC"/>
</dbReference>
<dbReference type="GO" id="GO:0020037">
    <property type="term" value="F:heme binding"/>
    <property type="evidence" value="ECO:0007669"/>
    <property type="project" value="InterPro"/>
</dbReference>
<dbReference type="GO" id="GO:0046872">
    <property type="term" value="F:metal ion binding"/>
    <property type="evidence" value="ECO:0007669"/>
    <property type="project" value="UniProtKB-KW"/>
</dbReference>
<dbReference type="GO" id="GO:0009060">
    <property type="term" value="P:aerobic respiration"/>
    <property type="evidence" value="ECO:0000318"/>
    <property type="project" value="GO_Central"/>
</dbReference>
<dbReference type="GO" id="GO:0006119">
    <property type="term" value="P:oxidative phosphorylation"/>
    <property type="evidence" value="ECO:0007669"/>
    <property type="project" value="UniProtKB-UniPathway"/>
</dbReference>
<dbReference type="GO" id="GO:0022904">
    <property type="term" value="P:respiratory electron transport chain"/>
    <property type="evidence" value="ECO:0000318"/>
    <property type="project" value="GO_Central"/>
</dbReference>
<dbReference type="CDD" id="cd01663">
    <property type="entry name" value="Cyt_c_Oxidase_I"/>
    <property type="match status" value="1"/>
</dbReference>
<dbReference type="FunFam" id="1.20.210.10:FF:000001">
    <property type="entry name" value="Cytochrome c oxidase subunit 1"/>
    <property type="match status" value="1"/>
</dbReference>
<dbReference type="Gene3D" id="1.20.210.10">
    <property type="entry name" value="Cytochrome c oxidase-like, subunit I domain"/>
    <property type="match status" value="1"/>
</dbReference>
<dbReference type="InterPro" id="IPR023616">
    <property type="entry name" value="Cyt_c_oxase-like_su1_dom"/>
</dbReference>
<dbReference type="InterPro" id="IPR036927">
    <property type="entry name" value="Cyt_c_oxase-like_su1_sf"/>
</dbReference>
<dbReference type="InterPro" id="IPR000883">
    <property type="entry name" value="Cyt_C_Oxase_1"/>
</dbReference>
<dbReference type="InterPro" id="IPR023615">
    <property type="entry name" value="Cyt_c_Oxase_su1_BS"/>
</dbReference>
<dbReference type="InterPro" id="IPR033944">
    <property type="entry name" value="Cyt_c_oxase_su1_dom"/>
</dbReference>
<dbReference type="PANTHER" id="PTHR10422">
    <property type="entry name" value="CYTOCHROME C OXIDASE SUBUNIT 1"/>
    <property type="match status" value="1"/>
</dbReference>
<dbReference type="PANTHER" id="PTHR10422:SF18">
    <property type="entry name" value="CYTOCHROME C OXIDASE SUBUNIT 1"/>
    <property type="match status" value="1"/>
</dbReference>
<dbReference type="Pfam" id="PF00115">
    <property type="entry name" value="COX1"/>
    <property type="match status" value="1"/>
</dbReference>
<dbReference type="PRINTS" id="PR01165">
    <property type="entry name" value="CYCOXIDASEI"/>
</dbReference>
<dbReference type="SUPFAM" id="SSF81442">
    <property type="entry name" value="Cytochrome c oxidase subunit I-like"/>
    <property type="match status" value="1"/>
</dbReference>
<dbReference type="PROSITE" id="PS50855">
    <property type="entry name" value="COX1"/>
    <property type="match status" value="1"/>
</dbReference>
<dbReference type="PROSITE" id="PS00077">
    <property type="entry name" value="COX1_CUB"/>
    <property type="match status" value="1"/>
</dbReference>
<reference key="1">
    <citation type="journal article" date="2004" name="Science">
        <title>The Ashbya gossypii genome as a tool for mapping the ancient Saccharomyces cerevisiae genome.</title>
        <authorList>
            <person name="Dietrich F.S."/>
            <person name="Voegeli S."/>
            <person name="Brachat S."/>
            <person name="Lerch A."/>
            <person name="Gates K."/>
            <person name="Steiner S."/>
            <person name="Mohr C."/>
            <person name="Poehlmann R."/>
            <person name="Luedi P."/>
            <person name="Choi S."/>
            <person name="Wing R.A."/>
            <person name="Flavier A."/>
            <person name="Gaffney T.D."/>
            <person name="Philippsen P."/>
        </authorList>
    </citation>
    <scope>NUCLEOTIDE SEQUENCE [LARGE SCALE GENOMIC DNA]</scope>
    <source>
        <strain>ATCC 10895 / CBS 109.51 / FGSC 9923 / NRRL Y-1056</strain>
    </source>
</reference>
<reference key="2">
    <citation type="journal article" date="2013" name="G3 (Bethesda)">
        <title>Genomes of Ashbya fungi isolated from insects reveal four mating-type loci, numerous translocations, lack of transposons, and distinct gene duplications.</title>
        <authorList>
            <person name="Dietrich F.S."/>
            <person name="Voegeli S."/>
            <person name="Kuo S."/>
            <person name="Philippsen P."/>
        </authorList>
    </citation>
    <scope>GENOME REANNOTATION</scope>
    <source>
        <strain>ATCC 10895 / CBS 109.51 / FGSC 9923 / NRRL Y-1056</strain>
    </source>
</reference>
<sequence length="535" mass="60173">MYLQRWLFSTNAKDIAILYFIFSTFCGLAGTAMSFIIRMELSAPGQQYLQGQNQLFNVLVTGHTILMVFFLVMPMLIGGFGNYYLPLMIGASDMSFARLNNISFWTLPPTLICLLTSTMVESGTGTGWTVYPPLSSIQSHSGASVDLAIFSLHLTTISSLLGTINFIVTALNMRTNGMTLHKMPLFTWSILITAVMLLMSLPVLSAGVTMLLMDRNFNTSFFEVQGGGDPILYQHLFWFFGHPEVYIMIVPTFGMMSHIVSTYSKKPVFGEISMIYTMGSISLLGFLVWSHHMYVVGLDTDTRAYFTSATMIITIPTSIKVFSWLTTIYGGSLRLTTPMLYTLSFLFLFTVGGLTGVVLANTSLDVAFHDTYYVVTHFHYVLSLGAVFSMFAGYYYWSPTVLGLNYNEKLSQIQFWLIFLGTNIIFFPMHFLGINGMPRRIPDYPDTFTGWNLVSSFGSMMTIMSLMLFTYIIYDQLMNGLTNKVNNKSINYMKTPDFIESNNIFLMNTTKSSSIEFMLNSPPTIHSFNTPTIQS</sequence>
<proteinExistence type="inferred from homology"/>
<organism>
    <name type="scientific">Eremothecium gossypii (strain ATCC 10895 / CBS 109.51 / FGSC 9923 / NRRL Y-1056)</name>
    <name type="common">Yeast</name>
    <name type="synonym">Ashbya gossypii</name>
    <dbReference type="NCBI Taxonomy" id="284811"/>
    <lineage>
        <taxon>Eukaryota</taxon>
        <taxon>Fungi</taxon>
        <taxon>Dikarya</taxon>
        <taxon>Ascomycota</taxon>
        <taxon>Saccharomycotina</taxon>
        <taxon>Saccharomycetes</taxon>
        <taxon>Saccharomycetales</taxon>
        <taxon>Saccharomycetaceae</taxon>
        <taxon>Eremothecium</taxon>
    </lineage>
</organism>
<protein>
    <recommendedName>
        <fullName>Cytochrome c oxidase subunit 1</fullName>
        <ecNumber>7.1.1.9</ecNumber>
    </recommendedName>
    <alternativeName>
        <fullName>Cytochrome c oxidase polypeptide I</fullName>
    </alternativeName>
</protein>
<gene>
    <name type="primary">COX1</name>
    <name type="ordered locus">AMI002W</name>
    <name type="ORF">AgCOX1</name>
</gene>